<comment type="catalytic activity">
    <reaction evidence="1">
        <text>(6R)-10-formyltetrahydrofolate + 5-amino-1-(5-phospho-beta-D-ribosyl)imidazole-4-carboxamide = 5-formamido-1-(5-phospho-D-ribosyl)imidazole-4-carboxamide + (6S)-5,6,7,8-tetrahydrofolate</text>
        <dbReference type="Rhea" id="RHEA:22192"/>
        <dbReference type="ChEBI" id="CHEBI:57453"/>
        <dbReference type="ChEBI" id="CHEBI:58467"/>
        <dbReference type="ChEBI" id="CHEBI:58475"/>
        <dbReference type="ChEBI" id="CHEBI:195366"/>
        <dbReference type="EC" id="2.1.2.3"/>
    </reaction>
</comment>
<comment type="catalytic activity">
    <reaction evidence="1">
        <text>IMP + H2O = 5-formamido-1-(5-phospho-D-ribosyl)imidazole-4-carboxamide</text>
        <dbReference type="Rhea" id="RHEA:18445"/>
        <dbReference type="ChEBI" id="CHEBI:15377"/>
        <dbReference type="ChEBI" id="CHEBI:58053"/>
        <dbReference type="ChEBI" id="CHEBI:58467"/>
        <dbReference type="EC" id="3.5.4.10"/>
    </reaction>
</comment>
<comment type="pathway">
    <text evidence="1">Purine metabolism; IMP biosynthesis via de novo pathway; 5-formamido-1-(5-phospho-D-ribosyl)imidazole-4-carboxamide from 5-amino-1-(5-phospho-D-ribosyl)imidazole-4-carboxamide (10-formyl THF route): step 1/1.</text>
</comment>
<comment type="pathway">
    <text evidence="1">Purine metabolism; IMP biosynthesis via de novo pathway; IMP from 5-formamido-1-(5-phospho-D-ribosyl)imidazole-4-carboxamide: step 1/1.</text>
</comment>
<comment type="domain">
    <text evidence="1">The IMP cyclohydrolase activity resides in the N-terminal region.</text>
</comment>
<comment type="similarity">
    <text evidence="1">Belongs to the PurH family.</text>
</comment>
<dbReference type="EC" id="2.1.2.3" evidence="1"/>
<dbReference type="EC" id="3.5.4.10" evidence="1"/>
<dbReference type="EMBL" id="CP000962">
    <property type="protein sequence ID" value="ACA55496.1"/>
    <property type="molecule type" value="Genomic_DNA"/>
</dbReference>
<dbReference type="RefSeq" id="WP_012343467.1">
    <property type="nucleotide sequence ID" value="NC_010520.1"/>
</dbReference>
<dbReference type="SMR" id="B1KZ55"/>
<dbReference type="KEGG" id="cbl:CLK_2269"/>
<dbReference type="HOGENOM" id="CLU_016316_5_2_9"/>
<dbReference type="UniPathway" id="UPA00074">
    <property type="reaction ID" value="UER00133"/>
</dbReference>
<dbReference type="UniPathway" id="UPA00074">
    <property type="reaction ID" value="UER00135"/>
</dbReference>
<dbReference type="GO" id="GO:0005829">
    <property type="term" value="C:cytosol"/>
    <property type="evidence" value="ECO:0007669"/>
    <property type="project" value="TreeGrafter"/>
</dbReference>
<dbReference type="GO" id="GO:0003937">
    <property type="term" value="F:IMP cyclohydrolase activity"/>
    <property type="evidence" value="ECO:0007669"/>
    <property type="project" value="UniProtKB-UniRule"/>
</dbReference>
<dbReference type="GO" id="GO:0004643">
    <property type="term" value="F:phosphoribosylaminoimidazolecarboxamide formyltransferase activity"/>
    <property type="evidence" value="ECO:0007669"/>
    <property type="project" value="UniProtKB-UniRule"/>
</dbReference>
<dbReference type="GO" id="GO:0006189">
    <property type="term" value="P:'de novo' IMP biosynthetic process"/>
    <property type="evidence" value="ECO:0007669"/>
    <property type="project" value="UniProtKB-UniRule"/>
</dbReference>
<dbReference type="CDD" id="cd01421">
    <property type="entry name" value="IMPCH"/>
    <property type="match status" value="1"/>
</dbReference>
<dbReference type="FunFam" id="3.40.140.20:FF:000001">
    <property type="entry name" value="Bifunctional purine biosynthesis protein PurH"/>
    <property type="match status" value="1"/>
</dbReference>
<dbReference type="FunFam" id="3.40.140.20:FF:000002">
    <property type="entry name" value="Bifunctional purine biosynthesis protein PurH"/>
    <property type="match status" value="1"/>
</dbReference>
<dbReference type="FunFam" id="3.40.50.1380:FF:000001">
    <property type="entry name" value="Bifunctional purine biosynthesis protein PurH"/>
    <property type="match status" value="1"/>
</dbReference>
<dbReference type="Gene3D" id="3.40.140.20">
    <property type="match status" value="2"/>
</dbReference>
<dbReference type="Gene3D" id="3.40.50.1380">
    <property type="entry name" value="Methylglyoxal synthase-like domain"/>
    <property type="match status" value="1"/>
</dbReference>
<dbReference type="HAMAP" id="MF_00139">
    <property type="entry name" value="PurH"/>
    <property type="match status" value="1"/>
</dbReference>
<dbReference type="InterPro" id="IPR024051">
    <property type="entry name" value="AICAR_Tfase_dup_dom_sf"/>
</dbReference>
<dbReference type="InterPro" id="IPR016193">
    <property type="entry name" value="Cytidine_deaminase-like"/>
</dbReference>
<dbReference type="InterPro" id="IPR011607">
    <property type="entry name" value="MGS-like_dom"/>
</dbReference>
<dbReference type="InterPro" id="IPR036914">
    <property type="entry name" value="MGS-like_dom_sf"/>
</dbReference>
<dbReference type="InterPro" id="IPR002695">
    <property type="entry name" value="PurH-like"/>
</dbReference>
<dbReference type="NCBIfam" id="NF002049">
    <property type="entry name" value="PRK00881.1"/>
    <property type="match status" value="1"/>
</dbReference>
<dbReference type="NCBIfam" id="TIGR00355">
    <property type="entry name" value="purH"/>
    <property type="match status" value="1"/>
</dbReference>
<dbReference type="PANTHER" id="PTHR11692:SF0">
    <property type="entry name" value="BIFUNCTIONAL PURINE BIOSYNTHESIS PROTEIN ATIC"/>
    <property type="match status" value="1"/>
</dbReference>
<dbReference type="PANTHER" id="PTHR11692">
    <property type="entry name" value="BIFUNCTIONAL PURINE BIOSYNTHESIS PROTEIN PURH"/>
    <property type="match status" value="1"/>
</dbReference>
<dbReference type="Pfam" id="PF01808">
    <property type="entry name" value="AICARFT_IMPCHas"/>
    <property type="match status" value="1"/>
</dbReference>
<dbReference type="Pfam" id="PF02142">
    <property type="entry name" value="MGS"/>
    <property type="match status" value="1"/>
</dbReference>
<dbReference type="PIRSF" id="PIRSF000414">
    <property type="entry name" value="AICARFT_IMPCHas"/>
    <property type="match status" value="1"/>
</dbReference>
<dbReference type="SMART" id="SM00798">
    <property type="entry name" value="AICARFT_IMPCHas"/>
    <property type="match status" value="1"/>
</dbReference>
<dbReference type="SMART" id="SM00851">
    <property type="entry name" value="MGS"/>
    <property type="match status" value="1"/>
</dbReference>
<dbReference type="SUPFAM" id="SSF53927">
    <property type="entry name" value="Cytidine deaminase-like"/>
    <property type="match status" value="1"/>
</dbReference>
<dbReference type="SUPFAM" id="SSF52335">
    <property type="entry name" value="Methylglyoxal synthase-like"/>
    <property type="match status" value="1"/>
</dbReference>
<dbReference type="PROSITE" id="PS51855">
    <property type="entry name" value="MGS"/>
    <property type="match status" value="1"/>
</dbReference>
<proteinExistence type="inferred from homology"/>
<gene>
    <name evidence="1" type="primary">purH</name>
    <name type="ordered locus">CLK_2269</name>
</gene>
<feature type="chain" id="PRO_1000096056" description="Bifunctional purine biosynthesis protein PurH">
    <location>
        <begin position="1"/>
        <end position="499"/>
    </location>
</feature>
<feature type="domain" description="MGS-like" evidence="2">
    <location>
        <begin position="1"/>
        <end position="144"/>
    </location>
</feature>
<name>PUR9_CLOBM</name>
<organism>
    <name type="scientific">Clostridium botulinum (strain Loch Maree / Type A3)</name>
    <dbReference type="NCBI Taxonomy" id="498214"/>
    <lineage>
        <taxon>Bacteria</taxon>
        <taxon>Bacillati</taxon>
        <taxon>Bacillota</taxon>
        <taxon>Clostridia</taxon>
        <taxon>Eubacteriales</taxon>
        <taxon>Clostridiaceae</taxon>
        <taxon>Clostridium</taxon>
    </lineage>
</organism>
<accession>B1KZ55</accession>
<protein>
    <recommendedName>
        <fullName evidence="1">Bifunctional purine biosynthesis protein PurH</fullName>
    </recommendedName>
    <domain>
        <recommendedName>
            <fullName evidence="1">Phosphoribosylaminoimidazolecarboxamide formyltransferase</fullName>
            <ecNumber evidence="1">2.1.2.3</ecNumber>
        </recommendedName>
        <alternativeName>
            <fullName evidence="1">AICAR transformylase</fullName>
        </alternativeName>
    </domain>
    <domain>
        <recommendedName>
            <fullName evidence="1">IMP cyclohydrolase</fullName>
            <ecNumber evidence="1">3.5.4.10</ecNumber>
        </recommendedName>
        <alternativeName>
            <fullName evidence="1">ATIC</fullName>
        </alternativeName>
        <alternativeName>
            <fullName evidence="1">IMP synthase</fullName>
        </alternativeName>
        <alternativeName>
            <fullName evidence="1">Inosinicase</fullName>
        </alternativeName>
    </domain>
</protein>
<sequence>MIKRALISVFDKTGILDLAKFLESRDVEIISTGGTYKHLKENGVKVIDIEEVTGFPEMLDGRVKTLNPLIHGGILAIRDNEEHMKVIEEKGIKPIDMVVVNLYPFFNKVEEDLSFDEKVEFIDIGGPTMIRAAAKNFKDVVVLTDTKDYENVINEIKENNQVNIKTRKKLAGKVFNLMSAYDAAISNFLLEEEYPEYLTLSYKKNMDLRYGENPHQAAAYYTSTVGKYPMKNFEKLNGKELSYNNIKDMDIAWKTVCEFKEVACCALKHNTPCGVAIGDTIQEVYTKAYECDPISIFGGIVAFNRKVDKETAENLIKIFLEIVVAPDFDEDALEVLKTKKNLRVIKCEEKSTQDKDMTKVDGGILVQQSDNKLLEDTKVVTEKSPTEKEMNDLIFGMKVVKYVKSNAIVVIKDGMAKGIGGGQVNRIWAAKEALDRAGDGVVLASDAFFPFGDVAEESAKWGIKAIIQPGGSIRDEESIKVCNEKGISMVFTGVRHFKH</sequence>
<reference key="1">
    <citation type="journal article" date="2007" name="PLoS ONE">
        <title>Analysis of the neurotoxin complex genes in Clostridium botulinum A1-A4 and B1 strains: BoNT/A3, /Ba4 and /B1 clusters are located within plasmids.</title>
        <authorList>
            <person name="Smith T.J."/>
            <person name="Hill K.K."/>
            <person name="Foley B.T."/>
            <person name="Detter J.C."/>
            <person name="Munk A.C."/>
            <person name="Bruce D.C."/>
            <person name="Doggett N.A."/>
            <person name="Smith L.A."/>
            <person name="Marks J.D."/>
            <person name="Xie G."/>
            <person name="Brettin T.S."/>
        </authorList>
    </citation>
    <scope>NUCLEOTIDE SEQUENCE [LARGE SCALE GENOMIC DNA]</scope>
    <source>
        <strain>Loch Maree / Type A3</strain>
    </source>
</reference>
<evidence type="ECO:0000255" key="1">
    <source>
        <dbReference type="HAMAP-Rule" id="MF_00139"/>
    </source>
</evidence>
<evidence type="ECO:0000255" key="2">
    <source>
        <dbReference type="PROSITE-ProRule" id="PRU01202"/>
    </source>
</evidence>
<keyword id="KW-0378">Hydrolase</keyword>
<keyword id="KW-0511">Multifunctional enzyme</keyword>
<keyword id="KW-0658">Purine biosynthesis</keyword>
<keyword id="KW-0808">Transferase</keyword>